<gene>
    <name type="primary">NAC055</name>
    <name type="synonym">NAC3</name>
    <name type="ordered locus">At3g15500</name>
    <name type="ORF">MJK13.16</name>
</gene>
<sequence>MGLQELDPLAQLSLPPGFRFYPTDEELMVEYLCRKAAGHDFSLQLIAEIDLYKFDPWVLPSKALFGEKEWYFFSPRDRKYPNGSRPNRVAGSGYWKATGTDKVISTEGRRVGIKKALVFYIGKAPKGTKTNWIMHEYRLIEPSRRNGSTKLDDWVLCRIYKKQTSAQKQAYNNLMTSGREYSNNGSSTSSSSHQYDDVLESLHEIDNRSLGFAAGSSNALPHSHRPVLTNHKTGFQGLAREPSFDWANLIGQNSVPELGLSHNVPSIRYGDGGTQQQTEGIPRFNNNSDVSANQGFSVDPVNGFGYSGQQSSGFGFI</sequence>
<keyword id="KW-0238">DNA-binding</keyword>
<keyword id="KW-0539">Nucleus</keyword>
<keyword id="KW-1185">Reference proteome</keyword>
<keyword id="KW-0804">Transcription</keyword>
<keyword id="KW-0805">Transcription regulation</keyword>
<organism>
    <name type="scientific">Arabidopsis thaliana</name>
    <name type="common">Mouse-ear cress</name>
    <dbReference type="NCBI Taxonomy" id="3702"/>
    <lineage>
        <taxon>Eukaryota</taxon>
        <taxon>Viridiplantae</taxon>
        <taxon>Streptophyta</taxon>
        <taxon>Embryophyta</taxon>
        <taxon>Tracheophyta</taxon>
        <taxon>Spermatophyta</taxon>
        <taxon>Magnoliopsida</taxon>
        <taxon>eudicotyledons</taxon>
        <taxon>Gunneridae</taxon>
        <taxon>Pentapetalae</taxon>
        <taxon>rosids</taxon>
        <taxon>malvids</taxon>
        <taxon>Brassicales</taxon>
        <taxon>Brassicaceae</taxon>
        <taxon>Camelineae</taxon>
        <taxon>Arabidopsis</taxon>
    </lineage>
</organism>
<proteinExistence type="evidence at transcript level"/>
<reference key="1">
    <citation type="journal article" date="2001" name="Development">
        <title>The CUP-SHAPED COTYLEDON1 gene of Arabidopsis regulates shoot apical meristem formation.</title>
        <authorList>
            <person name="Takada S."/>
            <person name="Hibara K."/>
            <person name="Ishida T."/>
            <person name="Tasaka M."/>
        </authorList>
    </citation>
    <scope>NUCLEOTIDE SEQUENCE [MRNA]</scope>
</reference>
<reference key="2">
    <citation type="journal article" date="2000" name="DNA Res.">
        <title>Structural analysis of Arabidopsis thaliana chromosome 3. I. Sequence features of the regions of 4,504,864 bp covered by sixty P1 and TAC clones.</title>
        <authorList>
            <person name="Sato S."/>
            <person name="Nakamura Y."/>
            <person name="Kaneko T."/>
            <person name="Katoh T."/>
            <person name="Asamizu E."/>
            <person name="Tabata S."/>
        </authorList>
    </citation>
    <scope>NUCLEOTIDE SEQUENCE [LARGE SCALE GENOMIC DNA]</scope>
    <source>
        <strain>cv. Columbia</strain>
    </source>
</reference>
<reference key="3">
    <citation type="journal article" date="2000" name="Nature">
        <title>Sequence and analysis of chromosome 3 of the plant Arabidopsis thaliana.</title>
        <authorList>
            <person name="Salanoubat M."/>
            <person name="Lemcke K."/>
            <person name="Rieger M."/>
            <person name="Ansorge W."/>
            <person name="Unseld M."/>
            <person name="Fartmann B."/>
            <person name="Valle G."/>
            <person name="Bloecker H."/>
            <person name="Perez-Alonso M."/>
            <person name="Obermaier B."/>
            <person name="Delseny M."/>
            <person name="Boutry M."/>
            <person name="Grivell L.A."/>
            <person name="Mache R."/>
            <person name="Puigdomenech P."/>
            <person name="De Simone V."/>
            <person name="Choisne N."/>
            <person name="Artiguenave F."/>
            <person name="Robert C."/>
            <person name="Brottier P."/>
            <person name="Wincker P."/>
            <person name="Cattolico L."/>
            <person name="Weissenbach J."/>
            <person name="Saurin W."/>
            <person name="Quetier F."/>
            <person name="Schaefer M."/>
            <person name="Mueller-Auer S."/>
            <person name="Gabel C."/>
            <person name="Fuchs M."/>
            <person name="Benes V."/>
            <person name="Wurmbach E."/>
            <person name="Drzonek H."/>
            <person name="Erfle H."/>
            <person name="Jordan N."/>
            <person name="Bangert S."/>
            <person name="Wiedelmann R."/>
            <person name="Kranz H."/>
            <person name="Voss H."/>
            <person name="Holland R."/>
            <person name="Brandt P."/>
            <person name="Nyakatura G."/>
            <person name="Vezzi A."/>
            <person name="D'Angelo M."/>
            <person name="Pallavicini A."/>
            <person name="Toppo S."/>
            <person name="Simionati B."/>
            <person name="Conrad A."/>
            <person name="Hornischer K."/>
            <person name="Kauer G."/>
            <person name="Loehnert T.-H."/>
            <person name="Nordsiek G."/>
            <person name="Reichelt J."/>
            <person name="Scharfe M."/>
            <person name="Schoen O."/>
            <person name="Bargues M."/>
            <person name="Terol J."/>
            <person name="Climent J."/>
            <person name="Navarro P."/>
            <person name="Collado C."/>
            <person name="Perez-Perez A."/>
            <person name="Ottenwaelder B."/>
            <person name="Duchemin D."/>
            <person name="Cooke R."/>
            <person name="Laudie M."/>
            <person name="Berger-Llauro C."/>
            <person name="Purnelle B."/>
            <person name="Masuy D."/>
            <person name="de Haan M."/>
            <person name="Maarse A.C."/>
            <person name="Alcaraz J.-P."/>
            <person name="Cottet A."/>
            <person name="Casacuberta E."/>
            <person name="Monfort A."/>
            <person name="Argiriou A."/>
            <person name="Flores M."/>
            <person name="Liguori R."/>
            <person name="Vitale D."/>
            <person name="Mannhaupt G."/>
            <person name="Haase D."/>
            <person name="Schoof H."/>
            <person name="Rudd S."/>
            <person name="Zaccaria P."/>
            <person name="Mewes H.-W."/>
            <person name="Mayer K.F.X."/>
            <person name="Kaul S."/>
            <person name="Town C.D."/>
            <person name="Koo H.L."/>
            <person name="Tallon L.J."/>
            <person name="Jenkins J."/>
            <person name="Rooney T."/>
            <person name="Rizzo M."/>
            <person name="Walts A."/>
            <person name="Utterback T."/>
            <person name="Fujii C.Y."/>
            <person name="Shea T.P."/>
            <person name="Creasy T.H."/>
            <person name="Haas B."/>
            <person name="Maiti R."/>
            <person name="Wu D."/>
            <person name="Peterson J."/>
            <person name="Van Aken S."/>
            <person name="Pai G."/>
            <person name="Militscher J."/>
            <person name="Sellers P."/>
            <person name="Gill J.E."/>
            <person name="Feldblyum T.V."/>
            <person name="Preuss D."/>
            <person name="Lin X."/>
            <person name="Nierman W.C."/>
            <person name="Salzberg S.L."/>
            <person name="White O."/>
            <person name="Venter J.C."/>
            <person name="Fraser C.M."/>
            <person name="Kaneko T."/>
            <person name="Nakamura Y."/>
            <person name="Sato S."/>
            <person name="Kato T."/>
            <person name="Asamizu E."/>
            <person name="Sasamoto S."/>
            <person name="Kimura T."/>
            <person name="Idesawa K."/>
            <person name="Kawashima K."/>
            <person name="Kishida Y."/>
            <person name="Kiyokawa C."/>
            <person name="Kohara M."/>
            <person name="Matsumoto M."/>
            <person name="Matsuno A."/>
            <person name="Muraki A."/>
            <person name="Nakayama S."/>
            <person name="Nakazaki N."/>
            <person name="Shinpo S."/>
            <person name="Takeuchi C."/>
            <person name="Wada T."/>
            <person name="Watanabe A."/>
            <person name="Yamada M."/>
            <person name="Yasuda M."/>
            <person name="Tabata S."/>
        </authorList>
    </citation>
    <scope>NUCLEOTIDE SEQUENCE [LARGE SCALE GENOMIC DNA]</scope>
    <source>
        <strain>cv. Columbia</strain>
    </source>
</reference>
<reference key="4">
    <citation type="journal article" date="2017" name="Plant J.">
        <title>Araport11: a complete reannotation of the Arabidopsis thaliana reference genome.</title>
        <authorList>
            <person name="Cheng C.Y."/>
            <person name="Krishnakumar V."/>
            <person name="Chan A.P."/>
            <person name="Thibaud-Nissen F."/>
            <person name="Schobel S."/>
            <person name="Town C.D."/>
        </authorList>
    </citation>
    <scope>GENOME REANNOTATION</scope>
    <source>
        <strain>cv. Columbia</strain>
    </source>
</reference>
<reference key="5">
    <citation type="submission" date="2002-03" db="EMBL/GenBank/DDBJ databases">
        <title>Full-length cDNA from Arabidopsis thaliana.</title>
        <authorList>
            <person name="Brover V.V."/>
            <person name="Troukhan M.E."/>
            <person name="Alexandrov N.A."/>
            <person name="Lu Y.-P."/>
            <person name="Flavell R.B."/>
            <person name="Feldmann K.A."/>
        </authorList>
    </citation>
    <scope>NUCLEOTIDE SEQUENCE [LARGE SCALE MRNA]</scope>
</reference>
<reference key="6">
    <citation type="submission" date="2006-06" db="EMBL/GenBank/DDBJ databases">
        <title>Arabidopsis ORF clones.</title>
        <authorList>
            <person name="Shinn P."/>
            <person name="Chen H."/>
            <person name="Kim C.J."/>
            <person name="Quinitio C."/>
            <person name="Ecker J.R."/>
        </authorList>
    </citation>
    <scope>NUCLEOTIDE SEQUENCE [LARGE SCALE MRNA]</scope>
    <source>
        <strain>cv. Columbia</strain>
    </source>
</reference>
<reference key="7">
    <citation type="journal article" date="2003" name="DNA Res.">
        <title>Comprehensive analysis of NAC family genes in Oryza sativa and Arabidopsis thaliana.</title>
        <authorList>
            <person name="Ooka H."/>
            <person name="Satoh K."/>
            <person name="Doi K."/>
            <person name="Nagata T."/>
            <person name="Otomo Y."/>
            <person name="Murakami K."/>
            <person name="Matsubara K."/>
            <person name="Osato N."/>
            <person name="Kawai J."/>
            <person name="Carninci P."/>
            <person name="Hayashizaki Y."/>
            <person name="Suzuki K."/>
            <person name="Kojima K."/>
            <person name="Takahara Y."/>
            <person name="Yamamoto K."/>
            <person name="Kikuchi S."/>
        </authorList>
    </citation>
    <scope>GENE FAMILY</scope>
    <scope>NOMENCLATURE</scope>
</reference>
<reference key="8">
    <citation type="journal article" date="2004" name="Plant Cell">
        <title>Isolation and functional analysis of Arabidopsis stress-inducible NAC transcription factors that bind to a drought-responsive cis-element in the early responsive to dehydration stress 1 promoter.</title>
        <authorList>
            <person name="Tran L.-S.H."/>
            <person name="Nakashima K."/>
            <person name="Sakuma Y."/>
            <person name="Simpson S.D."/>
            <person name="Fujita Y."/>
            <person name="Maruyama K."/>
            <person name="Fujita M."/>
            <person name="Seki M."/>
            <person name="Shinozaki K."/>
            <person name="Yamaguchi-Shinozaki K."/>
        </authorList>
    </citation>
    <scope>FUNCTION</scope>
    <scope>TISSUE SPECIFICITY</scope>
    <scope>INDUCTION</scope>
</reference>
<comment type="function">
    <text evidence="2">Transcription factors that bind specifically to the 5'-CATGTG-3' motif.</text>
</comment>
<comment type="subcellular location">
    <subcellularLocation>
        <location evidence="3">Nucleus</location>
    </subcellularLocation>
</comment>
<comment type="tissue specificity">
    <text evidence="2">Expressed in leaves.</text>
</comment>
<comment type="induction">
    <text evidence="2">Strongly induced by high salinity. Slightly up-regulated by drought, abscisic acid (ABA) and jasmonic acid. Not induced by cold treatment.</text>
</comment>
<comment type="domain">
    <text>The NAC domain includes a DNA-binding domain and a dimerization domain.</text>
</comment>
<dbReference type="EMBL" id="AB049070">
    <property type="protein sequence ID" value="BAB20599.1"/>
    <property type="molecule type" value="mRNA"/>
</dbReference>
<dbReference type="EMBL" id="AB022218">
    <property type="protein sequence ID" value="BAB02379.1"/>
    <property type="molecule type" value="Genomic_DNA"/>
</dbReference>
<dbReference type="EMBL" id="AC024081">
    <property type="protein sequence ID" value="AAF35416.1"/>
    <property type="molecule type" value="Genomic_DNA"/>
</dbReference>
<dbReference type="EMBL" id="CP002686">
    <property type="protein sequence ID" value="AEE75683.1"/>
    <property type="molecule type" value="Genomic_DNA"/>
</dbReference>
<dbReference type="EMBL" id="AY084508">
    <property type="protein sequence ID" value="AAM61076.1"/>
    <property type="molecule type" value="mRNA"/>
</dbReference>
<dbReference type="EMBL" id="BT025659">
    <property type="protein sequence ID" value="ABF74720.1"/>
    <property type="molecule type" value="mRNA"/>
</dbReference>
<dbReference type="RefSeq" id="NP_188169.1">
    <property type="nucleotide sequence ID" value="NM_112418.4"/>
</dbReference>
<dbReference type="SMR" id="Q9LDY8"/>
<dbReference type="BioGRID" id="6123">
    <property type="interactions" value="13"/>
</dbReference>
<dbReference type="STRING" id="3702.Q9LDY8"/>
<dbReference type="iPTMnet" id="Q9LDY8"/>
<dbReference type="MetOSite" id="Q9LDY8"/>
<dbReference type="PaxDb" id="3702-AT3G15500.1"/>
<dbReference type="ProteomicsDB" id="251311"/>
<dbReference type="DNASU" id="820789"/>
<dbReference type="EnsemblPlants" id="AT3G15500.1">
    <property type="protein sequence ID" value="AT3G15500.1"/>
    <property type="gene ID" value="AT3G15500"/>
</dbReference>
<dbReference type="GeneID" id="820789"/>
<dbReference type="Gramene" id="AT3G15500.1">
    <property type="protein sequence ID" value="AT3G15500.1"/>
    <property type="gene ID" value="AT3G15500"/>
</dbReference>
<dbReference type="KEGG" id="ath:AT3G15500"/>
<dbReference type="Araport" id="AT3G15500"/>
<dbReference type="TAIR" id="AT3G15500">
    <property type="gene designation" value="NAC3"/>
</dbReference>
<dbReference type="eggNOG" id="ENOG502QRBC">
    <property type="taxonomic scope" value="Eukaryota"/>
</dbReference>
<dbReference type="HOGENOM" id="CLU_035664_8_4_1"/>
<dbReference type="InParanoid" id="Q9LDY8"/>
<dbReference type="OMA" id="PTFCHVE"/>
<dbReference type="PhylomeDB" id="Q9LDY8"/>
<dbReference type="PRO" id="PR:Q9LDY8"/>
<dbReference type="Proteomes" id="UP000006548">
    <property type="component" value="Chromosome 3"/>
</dbReference>
<dbReference type="ExpressionAtlas" id="Q9LDY8">
    <property type="expression patterns" value="baseline and differential"/>
</dbReference>
<dbReference type="GO" id="GO:0005634">
    <property type="term" value="C:nucleus"/>
    <property type="evidence" value="ECO:0007669"/>
    <property type="project" value="UniProtKB-SubCell"/>
</dbReference>
<dbReference type="GO" id="GO:0003677">
    <property type="term" value="F:DNA binding"/>
    <property type="evidence" value="ECO:0007669"/>
    <property type="project" value="UniProtKB-KW"/>
</dbReference>
<dbReference type="GO" id="GO:0003700">
    <property type="term" value="F:DNA-binding transcription factor activity"/>
    <property type="evidence" value="ECO:0000314"/>
    <property type="project" value="TAIR"/>
</dbReference>
<dbReference type="GO" id="GO:0009867">
    <property type="term" value="P:jasmonic acid mediated signaling pathway"/>
    <property type="evidence" value="ECO:0000304"/>
    <property type="project" value="TAIR"/>
</dbReference>
<dbReference type="GO" id="GO:0009414">
    <property type="term" value="P:response to water deprivation"/>
    <property type="evidence" value="ECO:0000315"/>
    <property type="project" value="TAIR"/>
</dbReference>
<dbReference type="FunFam" id="2.170.150.80:FF:000008">
    <property type="entry name" value="NAC domain-containing protein 72-like"/>
    <property type="match status" value="1"/>
</dbReference>
<dbReference type="Gene3D" id="2.170.150.80">
    <property type="entry name" value="NAC domain"/>
    <property type="match status" value="1"/>
</dbReference>
<dbReference type="InterPro" id="IPR003441">
    <property type="entry name" value="NAC-dom"/>
</dbReference>
<dbReference type="InterPro" id="IPR036093">
    <property type="entry name" value="NAC_dom_sf"/>
</dbReference>
<dbReference type="PANTHER" id="PTHR31744:SF233">
    <property type="entry name" value="NAC DOMAIN-CONTAINING PROTEIN 72-LIKE"/>
    <property type="match status" value="1"/>
</dbReference>
<dbReference type="PANTHER" id="PTHR31744">
    <property type="entry name" value="PROTEIN CUP-SHAPED COTYLEDON 2-RELATED"/>
    <property type="match status" value="1"/>
</dbReference>
<dbReference type="Pfam" id="PF02365">
    <property type="entry name" value="NAM"/>
    <property type="match status" value="1"/>
</dbReference>
<dbReference type="SUPFAM" id="SSF101941">
    <property type="entry name" value="NAC domain"/>
    <property type="match status" value="1"/>
</dbReference>
<dbReference type="PROSITE" id="PS51005">
    <property type="entry name" value="NAC"/>
    <property type="match status" value="1"/>
</dbReference>
<accession>Q9LDY8</accession>
<accession>Q8LG20</accession>
<evidence type="ECO:0000255" key="1">
    <source>
        <dbReference type="PROSITE-ProRule" id="PRU00353"/>
    </source>
</evidence>
<evidence type="ECO:0000269" key="2">
    <source>
    </source>
</evidence>
<evidence type="ECO:0000305" key="3"/>
<feature type="chain" id="PRO_0000376617" description="NAC domain-containing protein 55">
    <location>
        <begin position="1"/>
        <end position="317"/>
    </location>
</feature>
<feature type="domain" description="NAC" evidence="1">
    <location>
        <begin position="14"/>
        <end position="162"/>
    </location>
</feature>
<feature type="DNA-binding region" evidence="1">
    <location>
        <begin position="111"/>
        <end position="168"/>
    </location>
</feature>
<feature type="sequence conflict" description="In Ref. 5; AAM61076." evidence="3" ref="5">
    <original>K</original>
    <variation>N</variation>
    <location>
        <position position="150"/>
    </location>
</feature>
<name>NAC55_ARATH</name>
<protein>
    <recommendedName>
        <fullName>NAC domain-containing protein 55</fullName>
        <shortName>ANAC055</shortName>
    </recommendedName>
    <alternativeName>
        <fullName>NAC domain-containing protein 3</fullName>
        <shortName>AtNAC3</shortName>
    </alternativeName>
</protein>